<gene>
    <name evidence="3" type="primary">SPH24</name>
    <name evidence="4" type="ordered locus">At5g36906</name>
    <name evidence="4" type="ORF">MLF18</name>
</gene>
<feature type="signal peptide" evidence="1">
    <location>
        <begin position="1"/>
        <end status="unknown"/>
    </location>
</feature>
<feature type="chain" id="PRO_0000439573" description="S-protein homolog 24">
    <location>
        <begin status="unknown"/>
        <end position="150"/>
    </location>
</feature>
<feature type="glycosylation site" description="N-linked (GlcNAc...) asparagine" evidence="2">
    <location>
        <position position="122"/>
    </location>
</feature>
<accession>P0DN92</accession>
<organism>
    <name type="scientific">Arabidopsis thaliana</name>
    <name type="common">Mouse-ear cress</name>
    <dbReference type="NCBI Taxonomy" id="3702"/>
    <lineage>
        <taxon>Eukaryota</taxon>
        <taxon>Viridiplantae</taxon>
        <taxon>Streptophyta</taxon>
        <taxon>Embryophyta</taxon>
        <taxon>Tracheophyta</taxon>
        <taxon>Spermatophyta</taxon>
        <taxon>Magnoliopsida</taxon>
        <taxon>eudicotyledons</taxon>
        <taxon>Gunneridae</taxon>
        <taxon>Pentapetalae</taxon>
        <taxon>rosids</taxon>
        <taxon>malvids</taxon>
        <taxon>Brassicales</taxon>
        <taxon>Brassicaceae</taxon>
        <taxon>Camelineae</taxon>
        <taxon>Arabidopsis</taxon>
    </lineage>
</organism>
<sequence>MINSSRINLNSYFCSIFIVSIVVISLICSEALQIQEAKEPIRGHLTRVTIQNDNDYLLGIHCKSRDDDLGFHILAKGELFGWKFHVNFCYSTLYFCGFSQGQMKKGVFEIYRANRDFYRCANCTWKAEKDGIYGYSEDPVKGYLFYNWLK</sequence>
<evidence type="ECO:0000255" key="1"/>
<evidence type="ECO:0000255" key="2">
    <source>
        <dbReference type="PROSITE-ProRule" id="PRU00498"/>
    </source>
</evidence>
<evidence type="ECO:0000303" key="3">
    <source>
    </source>
</evidence>
<evidence type="ECO:0000305" key="4"/>
<evidence type="ECO:0000305" key="5">
    <source>
    </source>
</evidence>
<proteinExistence type="inferred from homology"/>
<dbReference type="EMBL" id="AB016877">
    <property type="status" value="NOT_ANNOTATED_CDS"/>
    <property type="molecule type" value="Genomic_DNA"/>
</dbReference>
<dbReference type="EMBL" id="CP002688">
    <property type="status" value="NOT_ANNOTATED_CDS"/>
    <property type="molecule type" value="Genomic_DNA"/>
</dbReference>
<dbReference type="SMR" id="P0DN92"/>
<dbReference type="GlyCosmos" id="P0DN92">
    <property type="glycosylation" value="1 site, No reported glycans"/>
</dbReference>
<dbReference type="GlyGen" id="P0DN92">
    <property type="glycosylation" value="1 site"/>
</dbReference>
<dbReference type="Araport" id="AT5G36906"/>
<dbReference type="TAIR" id="AT5G36906"/>
<dbReference type="InParanoid" id="P0DN92"/>
<dbReference type="PRO" id="PR:P0DN92"/>
<dbReference type="Proteomes" id="UP000006548">
    <property type="component" value="Chromosome 5"/>
</dbReference>
<dbReference type="ExpressionAtlas" id="P0DN92">
    <property type="expression patterns" value="baseline and differential"/>
</dbReference>
<dbReference type="GO" id="GO:0005576">
    <property type="term" value="C:extracellular region"/>
    <property type="evidence" value="ECO:0007669"/>
    <property type="project" value="UniProtKB-SubCell"/>
</dbReference>
<dbReference type="GO" id="GO:0060320">
    <property type="term" value="P:rejection of self pollen"/>
    <property type="evidence" value="ECO:0007669"/>
    <property type="project" value="UniProtKB-KW"/>
</dbReference>
<dbReference type="InterPro" id="IPR010264">
    <property type="entry name" value="Self-incomp_S1"/>
</dbReference>
<dbReference type="PANTHER" id="PTHR31232">
    <property type="match status" value="1"/>
</dbReference>
<dbReference type="PANTHER" id="PTHR31232:SF168">
    <property type="entry name" value="S-PROTEIN HOMOLOG 24-RELATED"/>
    <property type="match status" value="1"/>
</dbReference>
<dbReference type="Pfam" id="PF05938">
    <property type="entry name" value="Self-incomp_S1"/>
    <property type="match status" value="1"/>
</dbReference>
<reference key="1">
    <citation type="journal article" date="1998" name="DNA Res.">
        <title>Structural analysis of Arabidopsis thaliana chromosome 5. VIII. Sequence features of the regions of 1,081,958 bp covered by seventeen physically assigned P1 and TAC clones.</title>
        <authorList>
            <person name="Asamizu E."/>
            <person name="Sato S."/>
            <person name="Kaneko T."/>
            <person name="Nakamura Y."/>
            <person name="Kotani H."/>
            <person name="Miyajima N."/>
            <person name="Tabata S."/>
        </authorList>
    </citation>
    <scope>NUCLEOTIDE SEQUENCE [LARGE SCALE GENOMIC DNA]</scope>
    <source>
        <strain>cv. Columbia</strain>
    </source>
</reference>
<reference key="2">
    <citation type="journal article" date="2017" name="Plant J.">
        <title>Araport11: a complete reannotation of the Arabidopsis thaliana reference genome.</title>
        <authorList>
            <person name="Cheng C.Y."/>
            <person name="Krishnakumar V."/>
            <person name="Chan A.P."/>
            <person name="Thibaud-Nissen F."/>
            <person name="Schobel S."/>
            <person name="Town C.D."/>
        </authorList>
    </citation>
    <scope>GENOME REANNOTATION</scope>
    <source>
        <strain>cv. Columbia</strain>
    </source>
</reference>
<reference key="3">
    <citation type="journal article" date="1999" name="Plant Mol. Biol.">
        <title>Analysis of Arabidopsis genome sequence reveals a large new gene family in plants.</title>
        <authorList>
            <person name="Ride J.P."/>
            <person name="Davies E.M."/>
            <person name="Franklin F.C.H."/>
            <person name="Marshall D.F."/>
        </authorList>
    </citation>
    <scope>GENE FAMILY</scope>
    <scope>NOMENCLATURE</scope>
    <source>
        <strain>cv. Columbia</strain>
    </source>
</reference>
<name>SPH24_ARATH</name>
<comment type="subcellular location">
    <subcellularLocation>
        <location evidence="5">Secreted</location>
    </subcellularLocation>
</comment>
<comment type="similarity">
    <text evidence="4">Belongs to the plant self-incompatibility (S1) protein family.</text>
</comment>
<protein>
    <recommendedName>
        <fullName evidence="3">S-protein homolog 24</fullName>
    </recommendedName>
</protein>
<keyword id="KW-0325">Glycoprotein</keyword>
<keyword id="KW-1185">Reference proteome</keyword>
<keyword id="KW-0964">Secreted</keyword>
<keyword id="KW-0713">Self-incompatibility</keyword>
<keyword id="KW-0732">Signal</keyword>